<gene>
    <name evidence="1" type="primary">rplM</name>
    <name type="ordered locus">Amet_4443</name>
</gene>
<dbReference type="EMBL" id="CP000724">
    <property type="protein sequence ID" value="ABR50515.1"/>
    <property type="molecule type" value="Genomic_DNA"/>
</dbReference>
<dbReference type="RefSeq" id="WP_012065407.1">
    <property type="nucleotide sequence ID" value="NC_009633.1"/>
</dbReference>
<dbReference type="SMR" id="A6TWE7"/>
<dbReference type="STRING" id="293826.Amet_4443"/>
<dbReference type="KEGG" id="amt:Amet_4443"/>
<dbReference type="eggNOG" id="COG0102">
    <property type="taxonomic scope" value="Bacteria"/>
</dbReference>
<dbReference type="HOGENOM" id="CLU_082184_2_2_9"/>
<dbReference type="OrthoDB" id="9801330at2"/>
<dbReference type="Proteomes" id="UP000001572">
    <property type="component" value="Chromosome"/>
</dbReference>
<dbReference type="GO" id="GO:0022625">
    <property type="term" value="C:cytosolic large ribosomal subunit"/>
    <property type="evidence" value="ECO:0007669"/>
    <property type="project" value="TreeGrafter"/>
</dbReference>
<dbReference type="GO" id="GO:0003729">
    <property type="term" value="F:mRNA binding"/>
    <property type="evidence" value="ECO:0007669"/>
    <property type="project" value="TreeGrafter"/>
</dbReference>
<dbReference type="GO" id="GO:0003735">
    <property type="term" value="F:structural constituent of ribosome"/>
    <property type="evidence" value="ECO:0007669"/>
    <property type="project" value="InterPro"/>
</dbReference>
<dbReference type="GO" id="GO:0017148">
    <property type="term" value="P:negative regulation of translation"/>
    <property type="evidence" value="ECO:0007669"/>
    <property type="project" value="TreeGrafter"/>
</dbReference>
<dbReference type="GO" id="GO:0006412">
    <property type="term" value="P:translation"/>
    <property type="evidence" value="ECO:0007669"/>
    <property type="project" value="UniProtKB-UniRule"/>
</dbReference>
<dbReference type="CDD" id="cd00392">
    <property type="entry name" value="Ribosomal_L13"/>
    <property type="match status" value="1"/>
</dbReference>
<dbReference type="FunFam" id="3.90.1180.10:FF:000001">
    <property type="entry name" value="50S ribosomal protein L13"/>
    <property type="match status" value="1"/>
</dbReference>
<dbReference type="Gene3D" id="3.90.1180.10">
    <property type="entry name" value="Ribosomal protein L13"/>
    <property type="match status" value="1"/>
</dbReference>
<dbReference type="HAMAP" id="MF_01366">
    <property type="entry name" value="Ribosomal_uL13"/>
    <property type="match status" value="1"/>
</dbReference>
<dbReference type="InterPro" id="IPR005822">
    <property type="entry name" value="Ribosomal_uL13"/>
</dbReference>
<dbReference type="InterPro" id="IPR005823">
    <property type="entry name" value="Ribosomal_uL13_bac-type"/>
</dbReference>
<dbReference type="InterPro" id="IPR023563">
    <property type="entry name" value="Ribosomal_uL13_CS"/>
</dbReference>
<dbReference type="InterPro" id="IPR036899">
    <property type="entry name" value="Ribosomal_uL13_sf"/>
</dbReference>
<dbReference type="NCBIfam" id="TIGR01066">
    <property type="entry name" value="rplM_bact"/>
    <property type="match status" value="1"/>
</dbReference>
<dbReference type="PANTHER" id="PTHR11545:SF2">
    <property type="entry name" value="LARGE RIBOSOMAL SUBUNIT PROTEIN UL13M"/>
    <property type="match status" value="1"/>
</dbReference>
<dbReference type="PANTHER" id="PTHR11545">
    <property type="entry name" value="RIBOSOMAL PROTEIN L13"/>
    <property type="match status" value="1"/>
</dbReference>
<dbReference type="Pfam" id="PF00572">
    <property type="entry name" value="Ribosomal_L13"/>
    <property type="match status" value="1"/>
</dbReference>
<dbReference type="PIRSF" id="PIRSF002181">
    <property type="entry name" value="Ribosomal_L13"/>
    <property type="match status" value="1"/>
</dbReference>
<dbReference type="SUPFAM" id="SSF52161">
    <property type="entry name" value="Ribosomal protein L13"/>
    <property type="match status" value="1"/>
</dbReference>
<dbReference type="PROSITE" id="PS00783">
    <property type="entry name" value="RIBOSOMAL_L13"/>
    <property type="match status" value="1"/>
</dbReference>
<accession>A6TWE7</accession>
<name>RL13_ALKMQ</name>
<proteinExistence type="inferred from homology"/>
<protein>
    <recommendedName>
        <fullName evidence="1">Large ribosomal subunit protein uL13</fullName>
    </recommendedName>
    <alternativeName>
        <fullName evidence="2">50S ribosomal protein L13</fullName>
    </alternativeName>
</protein>
<organism>
    <name type="scientific">Alkaliphilus metalliredigens (strain QYMF)</name>
    <dbReference type="NCBI Taxonomy" id="293826"/>
    <lineage>
        <taxon>Bacteria</taxon>
        <taxon>Bacillati</taxon>
        <taxon>Bacillota</taxon>
        <taxon>Clostridia</taxon>
        <taxon>Peptostreptococcales</taxon>
        <taxon>Natronincolaceae</taxon>
        <taxon>Alkaliphilus</taxon>
    </lineage>
</organism>
<feature type="chain" id="PRO_1000067986" description="Large ribosomal subunit protein uL13">
    <location>
        <begin position="1"/>
        <end position="142"/>
    </location>
</feature>
<comment type="function">
    <text evidence="1">This protein is one of the early assembly proteins of the 50S ribosomal subunit, although it is not seen to bind rRNA by itself. It is important during the early stages of 50S assembly.</text>
</comment>
<comment type="subunit">
    <text evidence="1">Part of the 50S ribosomal subunit.</text>
</comment>
<comment type="similarity">
    <text evidence="1">Belongs to the universal ribosomal protein uL13 family.</text>
</comment>
<sequence length="142" mass="16121">MKSYMAKTNEVERKWFIVDAEGKTLGRLSSEIAKILTGKNKPEYTPHVDTGDFVIVVNAEKVVLTGKKLDQESYTYHTGHPGGLKQISFRRMLAEKPELLTYHAVKGMIPKTRLGRQMLKKLKVYAGENHDHEAQQPQALEL</sequence>
<evidence type="ECO:0000255" key="1">
    <source>
        <dbReference type="HAMAP-Rule" id="MF_01366"/>
    </source>
</evidence>
<evidence type="ECO:0000305" key="2"/>
<reference key="1">
    <citation type="journal article" date="2016" name="Genome Announc.">
        <title>Complete genome sequence of Alkaliphilus metalliredigens strain QYMF, an alkaliphilic and metal-reducing bacterium isolated from borax-contaminated leachate ponds.</title>
        <authorList>
            <person name="Hwang C."/>
            <person name="Copeland A."/>
            <person name="Lucas S."/>
            <person name="Lapidus A."/>
            <person name="Barry K."/>
            <person name="Detter J.C."/>
            <person name="Glavina Del Rio T."/>
            <person name="Hammon N."/>
            <person name="Israni S."/>
            <person name="Dalin E."/>
            <person name="Tice H."/>
            <person name="Pitluck S."/>
            <person name="Chertkov O."/>
            <person name="Brettin T."/>
            <person name="Bruce D."/>
            <person name="Han C."/>
            <person name="Schmutz J."/>
            <person name="Larimer F."/>
            <person name="Land M.L."/>
            <person name="Hauser L."/>
            <person name="Kyrpides N."/>
            <person name="Mikhailova N."/>
            <person name="Ye Q."/>
            <person name="Zhou J."/>
            <person name="Richardson P."/>
            <person name="Fields M.W."/>
        </authorList>
    </citation>
    <scope>NUCLEOTIDE SEQUENCE [LARGE SCALE GENOMIC DNA]</scope>
    <source>
        <strain>QYMF</strain>
    </source>
</reference>
<keyword id="KW-1185">Reference proteome</keyword>
<keyword id="KW-0687">Ribonucleoprotein</keyword>
<keyword id="KW-0689">Ribosomal protein</keyword>